<accession>A7HY41</accession>
<comment type="function">
    <text evidence="1">NDH-1 shuttles electrons from NADH, via FMN and iron-sulfur (Fe-S) centers, to quinones in the respiratory chain. The immediate electron acceptor for the enzyme in this species is believed to be ubiquinone. Couples the redox reaction to proton translocation (for every two electrons transferred, four hydrogen ions are translocated across the cytoplasmic membrane), and thus conserves the redox energy in a proton gradient.</text>
</comment>
<comment type="catalytic activity">
    <reaction evidence="1">
        <text>a quinone + NADH + 5 H(+)(in) = a quinol + NAD(+) + 4 H(+)(out)</text>
        <dbReference type="Rhea" id="RHEA:57888"/>
        <dbReference type="ChEBI" id="CHEBI:15378"/>
        <dbReference type="ChEBI" id="CHEBI:24646"/>
        <dbReference type="ChEBI" id="CHEBI:57540"/>
        <dbReference type="ChEBI" id="CHEBI:57945"/>
        <dbReference type="ChEBI" id="CHEBI:132124"/>
    </reaction>
</comment>
<comment type="cofactor">
    <cofactor evidence="1">
        <name>[4Fe-4S] cluster</name>
        <dbReference type="ChEBI" id="CHEBI:49883"/>
    </cofactor>
    <text evidence="1">Binds 2 [4Fe-4S] clusters per subunit.</text>
</comment>
<comment type="subunit">
    <text evidence="1">NDH-1 is composed of 14 different subunits. Subunits NuoA, H, J, K, L, M, N constitute the membrane sector of the complex.</text>
</comment>
<comment type="subcellular location">
    <subcellularLocation>
        <location evidence="1">Cell inner membrane</location>
        <topology evidence="1">Peripheral membrane protein</topology>
    </subcellularLocation>
</comment>
<comment type="similarity">
    <text evidence="1">Belongs to the complex I 23 kDa subunit family.</text>
</comment>
<organism>
    <name type="scientific">Parvibaculum lavamentivorans (strain DS-1 / DSM 13023 / NCIMB 13966)</name>
    <dbReference type="NCBI Taxonomy" id="402881"/>
    <lineage>
        <taxon>Bacteria</taxon>
        <taxon>Pseudomonadati</taxon>
        <taxon>Pseudomonadota</taxon>
        <taxon>Alphaproteobacteria</taxon>
        <taxon>Hyphomicrobiales</taxon>
        <taxon>Parvibaculaceae</taxon>
        <taxon>Parvibaculum</taxon>
    </lineage>
</organism>
<name>NUOI_PARL1</name>
<protein>
    <recommendedName>
        <fullName evidence="1">NADH-quinone oxidoreductase subunit I</fullName>
        <ecNumber evidence="1">7.1.1.-</ecNumber>
    </recommendedName>
    <alternativeName>
        <fullName evidence="1">NADH dehydrogenase I subunit I</fullName>
    </alternativeName>
    <alternativeName>
        <fullName evidence="1">NDH-1 subunit I</fullName>
    </alternativeName>
</protein>
<feature type="chain" id="PRO_1000073378" description="NADH-quinone oxidoreductase subunit I">
    <location>
        <begin position="1"/>
        <end position="163"/>
    </location>
</feature>
<feature type="domain" description="4Fe-4S ferredoxin-type 1" evidence="1">
    <location>
        <begin position="53"/>
        <end position="83"/>
    </location>
</feature>
<feature type="domain" description="4Fe-4S ferredoxin-type 2" evidence="1">
    <location>
        <begin position="94"/>
        <end position="123"/>
    </location>
</feature>
<feature type="binding site" evidence="1">
    <location>
        <position position="63"/>
    </location>
    <ligand>
        <name>[4Fe-4S] cluster</name>
        <dbReference type="ChEBI" id="CHEBI:49883"/>
        <label>1</label>
    </ligand>
</feature>
<feature type="binding site" evidence="1">
    <location>
        <position position="66"/>
    </location>
    <ligand>
        <name>[4Fe-4S] cluster</name>
        <dbReference type="ChEBI" id="CHEBI:49883"/>
        <label>1</label>
    </ligand>
</feature>
<feature type="binding site" evidence="1">
    <location>
        <position position="69"/>
    </location>
    <ligand>
        <name>[4Fe-4S] cluster</name>
        <dbReference type="ChEBI" id="CHEBI:49883"/>
        <label>1</label>
    </ligand>
</feature>
<feature type="binding site" evidence="1">
    <location>
        <position position="73"/>
    </location>
    <ligand>
        <name>[4Fe-4S] cluster</name>
        <dbReference type="ChEBI" id="CHEBI:49883"/>
        <label>2</label>
    </ligand>
</feature>
<feature type="binding site" evidence="1">
    <location>
        <position position="103"/>
    </location>
    <ligand>
        <name>[4Fe-4S] cluster</name>
        <dbReference type="ChEBI" id="CHEBI:49883"/>
        <label>2</label>
    </ligand>
</feature>
<feature type="binding site" evidence="1">
    <location>
        <position position="106"/>
    </location>
    <ligand>
        <name>[4Fe-4S] cluster</name>
        <dbReference type="ChEBI" id="CHEBI:49883"/>
        <label>2</label>
    </ligand>
</feature>
<feature type="binding site" evidence="1">
    <location>
        <position position="109"/>
    </location>
    <ligand>
        <name>[4Fe-4S] cluster</name>
        <dbReference type="ChEBI" id="CHEBI:49883"/>
        <label>2</label>
    </ligand>
</feature>
<feature type="binding site" evidence="1">
    <location>
        <position position="113"/>
    </location>
    <ligand>
        <name>[4Fe-4S] cluster</name>
        <dbReference type="ChEBI" id="CHEBI:49883"/>
        <label>1</label>
    </ligand>
</feature>
<dbReference type="EC" id="7.1.1.-" evidence="1"/>
<dbReference type="EMBL" id="CP000774">
    <property type="protein sequence ID" value="ABS64824.1"/>
    <property type="molecule type" value="Genomic_DNA"/>
</dbReference>
<dbReference type="RefSeq" id="WP_012112152.1">
    <property type="nucleotide sequence ID" value="NC_009719.1"/>
</dbReference>
<dbReference type="SMR" id="A7HY41"/>
<dbReference type="STRING" id="402881.Plav_3218"/>
<dbReference type="KEGG" id="pla:Plav_3218"/>
<dbReference type="eggNOG" id="COG1143">
    <property type="taxonomic scope" value="Bacteria"/>
</dbReference>
<dbReference type="HOGENOM" id="CLU_067218_5_1_5"/>
<dbReference type="OrthoDB" id="9808559at2"/>
<dbReference type="Proteomes" id="UP000006377">
    <property type="component" value="Chromosome"/>
</dbReference>
<dbReference type="GO" id="GO:0005886">
    <property type="term" value="C:plasma membrane"/>
    <property type="evidence" value="ECO:0007669"/>
    <property type="project" value="UniProtKB-SubCell"/>
</dbReference>
<dbReference type="GO" id="GO:0051539">
    <property type="term" value="F:4 iron, 4 sulfur cluster binding"/>
    <property type="evidence" value="ECO:0007669"/>
    <property type="project" value="UniProtKB-KW"/>
</dbReference>
<dbReference type="GO" id="GO:0005506">
    <property type="term" value="F:iron ion binding"/>
    <property type="evidence" value="ECO:0007669"/>
    <property type="project" value="UniProtKB-UniRule"/>
</dbReference>
<dbReference type="GO" id="GO:0050136">
    <property type="term" value="F:NADH:ubiquinone reductase (non-electrogenic) activity"/>
    <property type="evidence" value="ECO:0007669"/>
    <property type="project" value="UniProtKB-UniRule"/>
</dbReference>
<dbReference type="GO" id="GO:0048038">
    <property type="term" value="F:quinone binding"/>
    <property type="evidence" value="ECO:0007669"/>
    <property type="project" value="UniProtKB-KW"/>
</dbReference>
<dbReference type="GO" id="GO:0009060">
    <property type="term" value="P:aerobic respiration"/>
    <property type="evidence" value="ECO:0007669"/>
    <property type="project" value="TreeGrafter"/>
</dbReference>
<dbReference type="FunFam" id="3.30.70.3270:FF:000001">
    <property type="entry name" value="NADH-quinone oxidoreductase subunit I 1"/>
    <property type="match status" value="1"/>
</dbReference>
<dbReference type="Gene3D" id="3.30.70.3270">
    <property type="match status" value="1"/>
</dbReference>
<dbReference type="HAMAP" id="MF_01351">
    <property type="entry name" value="NDH1_NuoI"/>
    <property type="match status" value="1"/>
</dbReference>
<dbReference type="InterPro" id="IPR017896">
    <property type="entry name" value="4Fe4S_Fe-S-bd"/>
</dbReference>
<dbReference type="InterPro" id="IPR017900">
    <property type="entry name" value="4Fe4S_Fe_S_CS"/>
</dbReference>
<dbReference type="InterPro" id="IPR010226">
    <property type="entry name" value="NADH_quinone_OxRdtase_chainI"/>
</dbReference>
<dbReference type="NCBIfam" id="TIGR01971">
    <property type="entry name" value="NuoI"/>
    <property type="match status" value="1"/>
</dbReference>
<dbReference type="NCBIfam" id="NF004538">
    <property type="entry name" value="PRK05888.1-4"/>
    <property type="match status" value="1"/>
</dbReference>
<dbReference type="NCBIfam" id="NF004539">
    <property type="entry name" value="PRK05888.1-5"/>
    <property type="match status" value="1"/>
</dbReference>
<dbReference type="PANTHER" id="PTHR10849:SF20">
    <property type="entry name" value="NADH DEHYDROGENASE [UBIQUINONE] IRON-SULFUR PROTEIN 8, MITOCHONDRIAL"/>
    <property type="match status" value="1"/>
</dbReference>
<dbReference type="PANTHER" id="PTHR10849">
    <property type="entry name" value="NADH DEHYDROGENASE UBIQUINONE IRON-SULFUR PROTEIN 8, MITOCHONDRIAL"/>
    <property type="match status" value="1"/>
</dbReference>
<dbReference type="Pfam" id="PF12838">
    <property type="entry name" value="Fer4_7"/>
    <property type="match status" value="1"/>
</dbReference>
<dbReference type="SUPFAM" id="SSF54862">
    <property type="entry name" value="4Fe-4S ferredoxins"/>
    <property type="match status" value="1"/>
</dbReference>
<dbReference type="PROSITE" id="PS00198">
    <property type="entry name" value="4FE4S_FER_1"/>
    <property type="match status" value="2"/>
</dbReference>
<dbReference type="PROSITE" id="PS51379">
    <property type="entry name" value="4FE4S_FER_2"/>
    <property type="match status" value="2"/>
</dbReference>
<evidence type="ECO:0000255" key="1">
    <source>
        <dbReference type="HAMAP-Rule" id="MF_01351"/>
    </source>
</evidence>
<proteinExistence type="inferred from homology"/>
<sequence length="163" mass="18802">MAWLDQSARSLFLAEFVSSFLLAMRYFFKPKVTLNYPFEKGPLSPRFRGEHALRRYPNGEERCIACKLCEAICPALAITIEAGPRRNDGTRRTTRYDIDMTKCIYCGLCQEACPVDAIVEGPNFEFATETREELMYDKNRLLANGDRWEREIAKNIALDAPYR</sequence>
<reference key="1">
    <citation type="journal article" date="2011" name="Stand. Genomic Sci.">
        <title>Complete genome sequence of Parvibaculum lavamentivorans type strain (DS-1(T)).</title>
        <authorList>
            <person name="Schleheck D."/>
            <person name="Weiss M."/>
            <person name="Pitluck S."/>
            <person name="Bruce D."/>
            <person name="Land M.L."/>
            <person name="Han S."/>
            <person name="Saunders E."/>
            <person name="Tapia R."/>
            <person name="Detter C."/>
            <person name="Brettin T."/>
            <person name="Han J."/>
            <person name="Woyke T."/>
            <person name="Goodwin L."/>
            <person name="Pennacchio L."/>
            <person name="Nolan M."/>
            <person name="Cook A.M."/>
            <person name="Kjelleberg S."/>
            <person name="Thomas T."/>
        </authorList>
    </citation>
    <scope>NUCLEOTIDE SEQUENCE [LARGE SCALE GENOMIC DNA]</scope>
    <source>
        <strain>DS-1 / DSM 13023 / NCIMB 13966</strain>
    </source>
</reference>
<gene>
    <name evidence="1" type="primary">nuoI</name>
    <name type="ordered locus">Plav_3218</name>
</gene>
<keyword id="KW-0004">4Fe-4S</keyword>
<keyword id="KW-0997">Cell inner membrane</keyword>
<keyword id="KW-1003">Cell membrane</keyword>
<keyword id="KW-0408">Iron</keyword>
<keyword id="KW-0411">Iron-sulfur</keyword>
<keyword id="KW-0472">Membrane</keyword>
<keyword id="KW-0479">Metal-binding</keyword>
<keyword id="KW-0520">NAD</keyword>
<keyword id="KW-0874">Quinone</keyword>
<keyword id="KW-1185">Reference proteome</keyword>
<keyword id="KW-0677">Repeat</keyword>
<keyword id="KW-1278">Translocase</keyword>
<keyword id="KW-0830">Ubiquinone</keyword>